<name>RIMM_MYCBT</name>
<proteinExistence type="inferred from homology"/>
<gene>
    <name evidence="1" type="primary">rimM</name>
    <name type="ordered locus">JTY_2923</name>
</gene>
<protein>
    <recommendedName>
        <fullName evidence="1">Ribosome maturation factor RimM</fullName>
    </recommendedName>
</protein>
<evidence type="ECO:0000255" key="1">
    <source>
        <dbReference type="HAMAP-Rule" id="MF_00014"/>
    </source>
</evidence>
<accession>C1AG22</accession>
<dbReference type="EMBL" id="AP010918">
    <property type="protein sequence ID" value="BAH27201.1"/>
    <property type="molecule type" value="Genomic_DNA"/>
</dbReference>
<dbReference type="RefSeq" id="WP_003414726.1">
    <property type="nucleotide sequence ID" value="NZ_CP014566.1"/>
</dbReference>
<dbReference type="SMR" id="C1AG22"/>
<dbReference type="GeneID" id="45426894"/>
<dbReference type="KEGG" id="mbt:JTY_2923"/>
<dbReference type="HOGENOM" id="CLU_077636_0_0_11"/>
<dbReference type="GO" id="GO:0005737">
    <property type="term" value="C:cytoplasm"/>
    <property type="evidence" value="ECO:0007669"/>
    <property type="project" value="UniProtKB-SubCell"/>
</dbReference>
<dbReference type="GO" id="GO:0005840">
    <property type="term" value="C:ribosome"/>
    <property type="evidence" value="ECO:0007669"/>
    <property type="project" value="InterPro"/>
</dbReference>
<dbReference type="GO" id="GO:0043022">
    <property type="term" value="F:ribosome binding"/>
    <property type="evidence" value="ECO:0007669"/>
    <property type="project" value="InterPro"/>
</dbReference>
<dbReference type="GO" id="GO:0042274">
    <property type="term" value="P:ribosomal small subunit biogenesis"/>
    <property type="evidence" value="ECO:0007669"/>
    <property type="project" value="UniProtKB-UniRule"/>
</dbReference>
<dbReference type="GO" id="GO:0006364">
    <property type="term" value="P:rRNA processing"/>
    <property type="evidence" value="ECO:0007669"/>
    <property type="project" value="UniProtKB-UniRule"/>
</dbReference>
<dbReference type="Gene3D" id="2.30.30.240">
    <property type="entry name" value="PRC-barrel domain"/>
    <property type="match status" value="1"/>
</dbReference>
<dbReference type="Gene3D" id="2.40.30.60">
    <property type="entry name" value="RimM"/>
    <property type="match status" value="1"/>
</dbReference>
<dbReference type="HAMAP" id="MF_00014">
    <property type="entry name" value="Ribosome_mat_RimM"/>
    <property type="match status" value="1"/>
</dbReference>
<dbReference type="InterPro" id="IPR011033">
    <property type="entry name" value="PRC_barrel-like_sf"/>
</dbReference>
<dbReference type="InterPro" id="IPR056792">
    <property type="entry name" value="PRC_RimM"/>
</dbReference>
<dbReference type="InterPro" id="IPR011961">
    <property type="entry name" value="RimM"/>
</dbReference>
<dbReference type="InterPro" id="IPR002676">
    <property type="entry name" value="RimM_N"/>
</dbReference>
<dbReference type="InterPro" id="IPR036976">
    <property type="entry name" value="RimM_N_sf"/>
</dbReference>
<dbReference type="InterPro" id="IPR009000">
    <property type="entry name" value="Transl_B-barrel_sf"/>
</dbReference>
<dbReference type="NCBIfam" id="TIGR02273">
    <property type="entry name" value="16S_RimM"/>
    <property type="match status" value="1"/>
</dbReference>
<dbReference type="PANTHER" id="PTHR33692">
    <property type="entry name" value="RIBOSOME MATURATION FACTOR RIMM"/>
    <property type="match status" value="1"/>
</dbReference>
<dbReference type="PANTHER" id="PTHR33692:SF1">
    <property type="entry name" value="RIBOSOME MATURATION FACTOR RIMM"/>
    <property type="match status" value="1"/>
</dbReference>
<dbReference type="Pfam" id="PF24986">
    <property type="entry name" value="PRC_RimM"/>
    <property type="match status" value="1"/>
</dbReference>
<dbReference type="Pfam" id="PF01782">
    <property type="entry name" value="RimM"/>
    <property type="match status" value="1"/>
</dbReference>
<dbReference type="SUPFAM" id="SSF50346">
    <property type="entry name" value="PRC-barrel domain"/>
    <property type="match status" value="1"/>
</dbReference>
<dbReference type="SUPFAM" id="SSF50447">
    <property type="entry name" value="Translation proteins"/>
    <property type="match status" value="1"/>
</dbReference>
<comment type="function">
    <text evidence="1">An accessory protein needed during the final step in the assembly of 30S ribosomal subunit, possibly for assembly of the head region. Essential for efficient processing of 16S rRNA. May be needed both before and after RbfA during the maturation of 16S rRNA. It has affinity for free ribosomal 30S subunits but not for 70S ribosomes.</text>
</comment>
<comment type="subunit">
    <text evidence="1">Binds ribosomal protein uS19.</text>
</comment>
<comment type="subcellular location">
    <subcellularLocation>
        <location evidence="1">Cytoplasm</location>
    </subcellularLocation>
</comment>
<comment type="domain">
    <text evidence="1">The PRC barrel domain binds ribosomal protein uS19.</text>
</comment>
<comment type="similarity">
    <text evidence="1">Belongs to the RimM family.</text>
</comment>
<reference key="1">
    <citation type="journal article" date="2009" name="Vaccine">
        <title>Whole genome sequence analysis of Mycobacterium bovis bacillus Calmette-Guerin (BCG) Tokyo 172: a comparative study of BCG vaccine substrains.</title>
        <authorList>
            <person name="Seki M."/>
            <person name="Honda I."/>
            <person name="Fujita I."/>
            <person name="Yano I."/>
            <person name="Yamamoto S."/>
            <person name="Koyama A."/>
        </authorList>
    </citation>
    <scope>NUCLEOTIDE SEQUENCE [LARGE SCALE GENOMIC DNA]</scope>
    <source>
        <strain>BCG / Tokyo 172 / ATCC 35737 / TMC 1019</strain>
    </source>
</reference>
<feature type="chain" id="PRO_1000196563" description="Ribosome maturation factor RimM">
    <location>
        <begin position="1"/>
        <end position="176"/>
    </location>
</feature>
<feature type="domain" description="PRC barrel" evidence="1">
    <location>
        <begin position="99"/>
        <end position="172"/>
    </location>
</feature>
<organism>
    <name type="scientific">Mycobacterium bovis (strain BCG / Tokyo 172 / ATCC 35737 / TMC 1019)</name>
    <dbReference type="NCBI Taxonomy" id="561275"/>
    <lineage>
        <taxon>Bacteria</taxon>
        <taxon>Bacillati</taxon>
        <taxon>Actinomycetota</taxon>
        <taxon>Actinomycetes</taxon>
        <taxon>Mycobacteriales</taxon>
        <taxon>Mycobacteriaceae</taxon>
        <taxon>Mycobacterium</taxon>
        <taxon>Mycobacterium tuberculosis complex</taxon>
    </lineage>
</organism>
<sequence length="176" mass="18616">MELVVGRVVKSHGVTGEVVVEIRTDDPADRFAPGTRLRAKGPFDGGAEGSAVSYVIESVRQHGGRLLVRLAGVADRDAADALRGSLFVIDADDLPPIDEPDTYYDHQLVGLMVQTATGEGVGVVTEVVHTAAGELLAVKRDSDEVLVPFVRAIVTSVSLDDGIVEIDPPHGLLNLE</sequence>
<keyword id="KW-0143">Chaperone</keyword>
<keyword id="KW-0963">Cytoplasm</keyword>
<keyword id="KW-0690">Ribosome biogenesis</keyword>
<keyword id="KW-0698">rRNA processing</keyword>